<dbReference type="EC" id="2.1.1.369" evidence="6 12"/>
<dbReference type="EMBL" id="AB006701">
    <property type="protein sequence ID" value="BAB10399.1"/>
    <property type="molecule type" value="Genomic_DNA"/>
</dbReference>
<dbReference type="EMBL" id="AB016884">
    <property type="protein sequence ID" value="BAB10399.1"/>
    <property type="status" value="JOINED"/>
    <property type="molecule type" value="Genomic_DNA"/>
</dbReference>
<dbReference type="EMBL" id="CP002688">
    <property type="protein sequence ID" value="AED93294.1"/>
    <property type="molecule type" value="Genomic_DNA"/>
</dbReference>
<dbReference type="EMBL" id="BT012223">
    <property type="protein sequence ID" value="AAS76710.1"/>
    <property type="molecule type" value="mRNA"/>
</dbReference>
<dbReference type="EMBL" id="BT012421">
    <property type="protein sequence ID" value="AAS92337.1"/>
    <property type="molecule type" value="mRNA"/>
</dbReference>
<dbReference type="RefSeq" id="NP_197821.1">
    <property type="nucleotide sequence ID" value="NM_122341.3"/>
</dbReference>
<dbReference type="SMR" id="Q9FNE9"/>
<dbReference type="BioGRID" id="17778">
    <property type="interactions" value="4"/>
</dbReference>
<dbReference type="DIP" id="DIP-48530N"/>
<dbReference type="FunCoup" id="Q9FNE9">
    <property type="interactions" value="92"/>
</dbReference>
<dbReference type="IntAct" id="Q9FNE9">
    <property type="interactions" value="2"/>
</dbReference>
<dbReference type="STRING" id="3702.Q9FNE9"/>
<dbReference type="iPTMnet" id="Q9FNE9"/>
<dbReference type="PaxDb" id="3702-AT5G24330.1"/>
<dbReference type="EnsemblPlants" id="AT5G24330.1">
    <property type="protein sequence ID" value="AT5G24330.1"/>
    <property type="gene ID" value="AT5G24330"/>
</dbReference>
<dbReference type="GeneID" id="832503"/>
<dbReference type="Gramene" id="AT5G24330.1">
    <property type="protein sequence ID" value="AT5G24330.1"/>
    <property type="gene ID" value="AT5G24330"/>
</dbReference>
<dbReference type="KEGG" id="ath:AT5G24330"/>
<dbReference type="Araport" id="AT5G24330"/>
<dbReference type="TAIR" id="AT5G24330">
    <property type="gene designation" value="ATXR6"/>
</dbReference>
<dbReference type="eggNOG" id="KOG1083">
    <property type="taxonomic scope" value="Eukaryota"/>
</dbReference>
<dbReference type="HOGENOM" id="CLU_051756_0_0_1"/>
<dbReference type="InParanoid" id="Q9FNE9"/>
<dbReference type="OMA" id="YCQNINF"/>
<dbReference type="PhylomeDB" id="Q9FNE9"/>
<dbReference type="BRENDA" id="2.1.1.369">
    <property type="organism ID" value="399"/>
</dbReference>
<dbReference type="PRO" id="PR:Q9FNE9"/>
<dbReference type="Proteomes" id="UP000006548">
    <property type="component" value="Chromosome 5"/>
</dbReference>
<dbReference type="ExpressionAtlas" id="Q9FNE9">
    <property type="expression patterns" value="baseline and differential"/>
</dbReference>
<dbReference type="GO" id="GO:0005634">
    <property type="term" value="C:nucleus"/>
    <property type="evidence" value="ECO:0000314"/>
    <property type="project" value="TAIR"/>
</dbReference>
<dbReference type="GO" id="GO:0046976">
    <property type="term" value="F:histone H3K27 methyltransferase activity"/>
    <property type="evidence" value="ECO:0000314"/>
    <property type="project" value="TAIR"/>
</dbReference>
<dbReference type="GO" id="GO:0140953">
    <property type="term" value="F:histone H3K27 monomethyltransferase activity"/>
    <property type="evidence" value="ECO:0007669"/>
    <property type="project" value="RHEA"/>
</dbReference>
<dbReference type="GO" id="GO:0008270">
    <property type="term" value="F:zinc ion binding"/>
    <property type="evidence" value="ECO:0007669"/>
    <property type="project" value="UniProtKB-KW"/>
</dbReference>
<dbReference type="GO" id="GO:0009901">
    <property type="term" value="P:anther dehiscence"/>
    <property type="evidence" value="ECO:0000315"/>
    <property type="project" value="TAIR"/>
</dbReference>
<dbReference type="GO" id="GO:0032259">
    <property type="term" value="P:methylation"/>
    <property type="evidence" value="ECO:0007669"/>
    <property type="project" value="UniProtKB-KW"/>
</dbReference>
<dbReference type="GO" id="GO:0051726">
    <property type="term" value="P:regulation of cell cycle"/>
    <property type="evidence" value="ECO:0000270"/>
    <property type="project" value="TAIR"/>
</dbReference>
<dbReference type="GO" id="GO:0006275">
    <property type="term" value="P:regulation of DNA replication"/>
    <property type="evidence" value="ECO:0000316"/>
    <property type="project" value="TAIR"/>
</dbReference>
<dbReference type="CDD" id="cd15543">
    <property type="entry name" value="PHD_RSF1"/>
    <property type="match status" value="1"/>
</dbReference>
<dbReference type="CDD" id="cd10539">
    <property type="entry name" value="SET_ATXR5_6-like"/>
    <property type="match status" value="1"/>
</dbReference>
<dbReference type="FunFam" id="2.170.270.10:FF:000038">
    <property type="entry name" value="Histone-lysine N-methyltransferase ATXR5"/>
    <property type="match status" value="1"/>
</dbReference>
<dbReference type="FunFam" id="3.30.40.10:FF:001090">
    <property type="entry name" value="Histone-lysine N-methyltransferase ATXR6"/>
    <property type="match status" value="1"/>
</dbReference>
<dbReference type="Gene3D" id="2.170.270.10">
    <property type="entry name" value="SET domain"/>
    <property type="match status" value="1"/>
</dbReference>
<dbReference type="Gene3D" id="3.30.40.10">
    <property type="entry name" value="Zinc/RING finger domain, C3HC4 (zinc finger)"/>
    <property type="match status" value="1"/>
</dbReference>
<dbReference type="InterPro" id="IPR053114">
    <property type="entry name" value="ATXR5/ATXR6"/>
</dbReference>
<dbReference type="InterPro" id="IPR001214">
    <property type="entry name" value="SET_dom"/>
</dbReference>
<dbReference type="InterPro" id="IPR046341">
    <property type="entry name" value="SET_dom_sf"/>
</dbReference>
<dbReference type="InterPro" id="IPR019786">
    <property type="entry name" value="Zinc_finger_PHD-type_CS"/>
</dbReference>
<dbReference type="InterPro" id="IPR011011">
    <property type="entry name" value="Znf_FYVE_PHD"/>
</dbReference>
<dbReference type="InterPro" id="IPR001965">
    <property type="entry name" value="Znf_PHD"/>
</dbReference>
<dbReference type="InterPro" id="IPR019787">
    <property type="entry name" value="Znf_PHD-finger"/>
</dbReference>
<dbReference type="InterPro" id="IPR013083">
    <property type="entry name" value="Znf_RING/FYVE/PHD"/>
</dbReference>
<dbReference type="PANTHER" id="PTHR48442">
    <property type="entry name" value="SET DOMAIN-CONTAINING PROTEIN"/>
    <property type="match status" value="1"/>
</dbReference>
<dbReference type="PANTHER" id="PTHR48442:SF1">
    <property type="entry name" value="SET DOMAIN-CONTAINING PROTEIN"/>
    <property type="match status" value="1"/>
</dbReference>
<dbReference type="Pfam" id="PF00628">
    <property type="entry name" value="PHD"/>
    <property type="match status" value="1"/>
</dbReference>
<dbReference type="Pfam" id="PF00856">
    <property type="entry name" value="SET"/>
    <property type="match status" value="1"/>
</dbReference>
<dbReference type="SMART" id="SM00249">
    <property type="entry name" value="PHD"/>
    <property type="match status" value="1"/>
</dbReference>
<dbReference type="SUPFAM" id="SSF57903">
    <property type="entry name" value="FYVE/PHD zinc finger"/>
    <property type="match status" value="1"/>
</dbReference>
<dbReference type="SUPFAM" id="SSF82199">
    <property type="entry name" value="SET domain"/>
    <property type="match status" value="1"/>
</dbReference>
<dbReference type="PROSITE" id="PS50280">
    <property type="entry name" value="SET"/>
    <property type="match status" value="1"/>
</dbReference>
<dbReference type="PROSITE" id="PS01359">
    <property type="entry name" value="ZF_PHD_1"/>
    <property type="match status" value="1"/>
</dbReference>
<dbReference type="PROSITE" id="PS50016">
    <property type="entry name" value="ZF_PHD_2"/>
    <property type="match status" value="1"/>
</dbReference>
<gene>
    <name type="primary">ATXR6</name>
    <name type="synonym">SDG34</name>
    <name type="synonym">SET34</name>
    <name type="ordered locus">At5g24330</name>
    <name type="ORF">MOP9.18</name>
</gene>
<keyword id="KW-0156">Chromatin regulator</keyword>
<keyword id="KW-0479">Metal-binding</keyword>
<keyword id="KW-0489">Methyltransferase</keyword>
<keyword id="KW-0539">Nucleus</keyword>
<keyword id="KW-1185">Reference proteome</keyword>
<keyword id="KW-0949">S-adenosyl-L-methionine</keyword>
<keyword id="KW-0808">Transferase</keyword>
<keyword id="KW-0862">Zinc</keyword>
<keyword id="KW-0863">Zinc-finger</keyword>
<evidence type="ECO:0000250" key="1"/>
<evidence type="ECO:0000255" key="2">
    <source>
        <dbReference type="PROSITE-ProRule" id="PRU00146"/>
    </source>
</evidence>
<evidence type="ECO:0000255" key="3">
    <source>
        <dbReference type="PROSITE-ProRule" id="PRU00190"/>
    </source>
</evidence>
<evidence type="ECO:0000256" key="4">
    <source>
        <dbReference type="SAM" id="MobiDB-lite"/>
    </source>
</evidence>
<evidence type="ECO:0000269" key="5">
    <source>
    </source>
</evidence>
<evidence type="ECO:0000269" key="6">
    <source>
    </source>
</evidence>
<evidence type="ECO:0000269" key="7">
    <source>
    </source>
</evidence>
<evidence type="ECO:0000269" key="8">
    <source>
    </source>
</evidence>
<evidence type="ECO:0000269" key="9">
    <source>
    </source>
</evidence>
<evidence type="ECO:0000269" key="10">
    <source>
    </source>
</evidence>
<evidence type="ECO:0000269" key="11">
    <source>
    </source>
</evidence>
<evidence type="ECO:0000269" key="12">
    <source>
    </source>
</evidence>
<evidence type="ECO:0000305" key="13">
    <source>
    </source>
</evidence>
<protein>
    <recommendedName>
        <fullName>Histone-lysine N-methyltransferase ATXR6</fullName>
        <ecNumber evidence="6 12">2.1.1.369</ecNumber>
    </recommendedName>
    <alternativeName>
        <fullName>Protein SET DOMAIN GROUP 34</fullName>
    </alternativeName>
    <alternativeName>
        <fullName>Trithorax-related protein 6</fullName>
        <shortName>TRX-related protein 6</shortName>
    </alternativeName>
</protein>
<accession>Q9FNE9</accession>
<proteinExistence type="evidence at protein level"/>
<feature type="chain" id="PRO_0000233363" description="Histone-lysine N-methyltransferase ATXR6">
    <location>
        <begin position="1"/>
        <end position="349"/>
    </location>
</feature>
<feature type="domain" description="SET" evidence="3">
    <location>
        <begin position="214"/>
        <end position="337"/>
    </location>
</feature>
<feature type="zinc finger region" description="PHD-type" evidence="2">
    <location>
        <begin position="32"/>
        <end position="82"/>
    </location>
</feature>
<feature type="region of interest" description="Disordered" evidence="4">
    <location>
        <begin position="1"/>
        <end position="28"/>
    </location>
</feature>
<feature type="region of interest" description="Disordered" evidence="4">
    <location>
        <begin position="105"/>
        <end position="126"/>
    </location>
</feature>
<feature type="short sequence motif" description="PIP motif">
    <location>
        <begin position="92"/>
        <end position="99"/>
    </location>
</feature>
<feature type="compositionally biased region" description="Low complexity" evidence="4">
    <location>
        <begin position="106"/>
        <end position="116"/>
    </location>
</feature>
<feature type="binding site" evidence="1">
    <location>
        <position position="190"/>
    </location>
    <ligand>
        <name>substrate</name>
    </ligand>
</feature>
<feature type="binding site" evidence="1">
    <location>
        <begin position="224"/>
        <end position="226"/>
    </location>
    <ligand>
        <name>S-adenosyl-L-methionine</name>
        <dbReference type="ChEBI" id="CHEBI:59789"/>
    </ligand>
</feature>
<feature type="binding site" evidence="1">
    <location>
        <begin position="287"/>
        <end position="291"/>
    </location>
    <ligand>
        <name>S-adenosyl-L-methionine</name>
        <dbReference type="ChEBI" id="CHEBI:59789"/>
    </ligand>
</feature>
<feature type="binding site" evidence="1">
    <location>
        <position position="309"/>
    </location>
    <ligand>
        <name>substrate</name>
    </ligand>
</feature>
<feature type="binding site" evidence="1">
    <location>
        <begin position="339"/>
        <end position="340"/>
    </location>
    <ligand>
        <name>substrate</name>
    </ligand>
</feature>
<feature type="binding site" evidence="3">
    <location>
        <position position="343"/>
    </location>
    <ligand>
        <name>S-adenosyl-L-methionine</name>
        <dbReference type="ChEBI" id="CHEBI:59789"/>
    </ligand>
</feature>
<feature type="binding site" evidence="3">
    <location>
        <position position="349"/>
    </location>
    <ligand>
        <name>S-adenosyl-L-methionine</name>
        <dbReference type="ChEBI" id="CHEBI:59789"/>
    </ligand>
</feature>
<feature type="mutagenesis site" description="Loss of methylation activity." evidence="8">
    <original>L</original>
    <variation>W</variation>
    <location>
        <position position="49"/>
    </location>
</feature>
<feature type="mutagenesis site" description="Loss of methylation activity." evidence="8">
    <original>Q</original>
    <variation>A</variation>
    <location>
        <position position="92"/>
    </location>
</feature>
<feature type="mutagenesis site" description="Loss of methylation activity." evidence="8">
    <original>I</original>
    <variation>A</variation>
    <location>
        <position position="95"/>
    </location>
</feature>
<feature type="mutagenesis site" description="Loss of methylation activity." evidence="8">
    <original>F</original>
    <variation>A</variation>
    <location>
        <position position="98"/>
    </location>
</feature>
<feature type="mutagenesis site" description="Loss of methylation activity." evidence="8">
    <original>F</original>
    <variation>A</variation>
    <location>
        <position position="99"/>
    </location>
</feature>
<feature type="mutagenesis site" description="24% methylation activity on histone H3.1 and loss of methylation activity on histone H3.3." evidence="11">
    <original>E</original>
    <variation>D</variation>
    <location>
        <position position="186"/>
    </location>
</feature>
<feature type="mutagenesis site" description="Loss of methylation activity." evidence="11">
    <original>E</original>
    <variation>S</variation>
    <variation>A</variation>
    <location>
        <position position="186"/>
    </location>
</feature>
<feature type="mutagenesis site" description="87% methylation activity on histone H3.1 and 2% methylation activity on histone H3.3." evidence="11">
    <original>M</original>
    <variation>A</variation>
    <location>
        <position position="190"/>
    </location>
</feature>
<feature type="mutagenesis site" description="Loss of methylation activity." evidence="8">
    <original>Y</original>
    <variation>N</variation>
    <location>
        <position position="243"/>
    </location>
</feature>
<feature type="mutagenesis site" description="2% methylation activity on histone H3.1 and 2% methylation activity on histone H3.3." evidence="11">
    <original>R</original>
    <variation>A</variation>
    <location>
        <position position="309"/>
    </location>
</feature>
<feature type="mutagenesis site" description="Loss of methylation activity." evidence="11">
    <original>R</original>
    <variation>Q</variation>
    <location>
        <position position="309"/>
    </location>
</feature>
<feature type="mutagenesis site" description="98% methylation activity on histone H3.1 and 22% methylation activity on histone H3.3." evidence="11">
    <original>Y</original>
    <variation>A</variation>
    <location>
        <position position="339"/>
    </location>
</feature>
<name>ATXR6_ARATH</name>
<reference key="1">
    <citation type="journal article" date="1997" name="DNA Res.">
        <title>Structural analysis of Arabidopsis thaliana chromosome 5. II. Sequence features of the regions of 1,044,062 bp covered by thirteen physically assigned P1 clones.</title>
        <authorList>
            <person name="Kotani H."/>
            <person name="Nakamura Y."/>
            <person name="Sato S."/>
            <person name="Kaneko T."/>
            <person name="Asamizu E."/>
            <person name="Miyajima N."/>
            <person name="Tabata S."/>
        </authorList>
    </citation>
    <scope>NUCLEOTIDE SEQUENCE [LARGE SCALE GENOMIC DNA]</scope>
    <source>
        <strain>cv. Columbia</strain>
    </source>
</reference>
<reference key="2">
    <citation type="journal article" date="1998" name="DNA Res.">
        <title>Structural analysis of Arabidopsis thaliana chromosome 5. VIII. Sequence features of the regions of 1,081,958 bp covered by seventeen physically assigned P1 and TAC clones.</title>
        <authorList>
            <person name="Asamizu E."/>
            <person name="Sato S."/>
            <person name="Kaneko T."/>
            <person name="Nakamura Y."/>
            <person name="Kotani H."/>
            <person name="Miyajima N."/>
            <person name="Tabata S."/>
        </authorList>
    </citation>
    <scope>NUCLEOTIDE SEQUENCE [LARGE SCALE GENOMIC DNA]</scope>
    <source>
        <strain>cv. Columbia</strain>
    </source>
</reference>
<reference key="3">
    <citation type="journal article" date="2017" name="Plant J.">
        <title>Araport11: a complete reannotation of the Arabidopsis thaliana reference genome.</title>
        <authorList>
            <person name="Cheng C.Y."/>
            <person name="Krishnakumar V."/>
            <person name="Chan A.P."/>
            <person name="Thibaud-Nissen F."/>
            <person name="Schobel S."/>
            <person name="Town C.D."/>
        </authorList>
    </citation>
    <scope>GENOME REANNOTATION</scope>
    <source>
        <strain>cv. Columbia</strain>
    </source>
</reference>
<reference key="4">
    <citation type="submission" date="2004-04" db="EMBL/GenBank/DDBJ databases">
        <title>Arabidopsis ORF clones.</title>
        <authorList>
            <person name="Shinn P."/>
            <person name="Chen H."/>
            <person name="Cheuk R.F."/>
            <person name="Kim C.J."/>
            <person name="Ecker J.R."/>
        </authorList>
    </citation>
    <scope>NUCLEOTIDE SEQUENCE [LARGE SCALE MRNA]</scope>
    <source>
        <strain>cv. Columbia</strain>
    </source>
</reference>
<reference key="5">
    <citation type="journal article" date="2001" name="Nucleic Acids Res.">
        <title>The Arabidopsis thaliana genome contains at least 29 active genes encoding SET domain proteins that can be assigned to four evolutionarily conserved classes.</title>
        <authorList>
            <person name="Baumbusch L.O."/>
            <person name="Thorstensen T."/>
            <person name="Krauss V."/>
            <person name="Fischer A."/>
            <person name="Naumann K."/>
            <person name="Assalkhou R."/>
            <person name="Schulz I."/>
            <person name="Reuter G."/>
            <person name="Aalen R.B."/>
        </authorList>
    </citation>
    <scope>NOMENCLATURE</scope>
</reference>
<reference key="6">
    <citation type="journal article" date="2006" name="Plant J.">
        <title>Two cell-cycle regulated SET-domain proteins interact with proliferating cell nuclear antigen (PCNA) in Arabidopsis.</title>
        <authorList>
            <person name="Raynaud C."/>
            <person name="Sozzani R."/>
            <person name="Glab N."/>
            <person name="Domenichini S."/>
            <person name="Perennes C."/>
            <person name="Cella R."/>
            <person name="Kondorosi E."/>
            <person name="Bergounioux C."/>
        </authorList>
    </citation>
    <scope>FUNCTION</scope>
    <scope>INTERACTION WITH PCNA1 AND PCNA2</scope>
    <scope>TISSUE SPECIFICITY</scope>
    <scope>SUBCELLULAR LOCATION</scope>
</reference>
<reference key="7">
    <citation type="journal article" date="2009" name="Nat. Struct. Mol. Biol.">
        <title>ATXR5 and ATXR6 are H3K27 monomethyltransferases required for chromatin structure and gene silencing.</title>
        <authorList>
            <person name="Jacob Y."/>
            <person name="Feng S."/>
            <person name="LeBlanc C.A."/>
            <person name="Bernatavichute Y.V."/>
            <person name="Stroud H."/>
            <person name="Cokus S."/>
            <person name="Johnson L.M."/>
            <person name="Pellegrini M."/>
            <person name="Jacobsen S.E."/>
            <person name="Michaels S.D."/>
        </authorList>
    </citation>
    <scope>FUNCTION</scope>
    <scope>CATALYTIC ACTIVITY</scope>
    <scope>DISRUPTION PHENOTYPE</scope>
</reference>
<reference key="8">
    <citation type="journal article" date="2009" name="PLoS ONE">
        <title>Crosstalks between myo-inositol metabolism, programmed cell death and basal immunity in Arabidopsis.</title>
        <authorList>
            <person name="Meng P.H."/>
            <person name="Raynaud C."/>
            <person name="Tcherkez G."/>
            <person name="Blanchet S."/>
            <person name="Massoud K."/>
            <person name="Domenichini S."/>
            <person name="Henry Y."/>
            <person name="Soubigou-Taconnat L."/>
            <person name="Lelarge-Trouverie C."/>
            <person name="Saindrenan P."/>
            <person name="Renou J.P."/>
            <person name="Bergounioux C."/>
        </authorList>
    </citation>
    <scope>INTERACTION WITH IPS1</scope>
</reference>
<reference key="9">
    <citation type="journal article" date="2010" name="Nature">
        <title>Regulation of heterochromatic DNA replication by histone H3 lysine 27 methyltransferases.</title>
        <authorList>
            <person name="Jacob Y."/>
            <person name="Stroud H."/>
            <person name="Leblanc C."/>
            <person name="Feng S."/>
            <person name="Zhuo L."/>
            <person name="Caro E."/>
            <person name="Hassel C."/>
            <person name="Gutierrez C."/>
            <person name="Michaels S.D."/>
            <person name="Jacobsen S.E."/>
        </authorList>
    </citation>
    <scope>FUNCTION</scope>
    <scope>INTERACTION WITH HTR1</scope>
    <scope>MUTAGENESIS OF LEU-49; GLN-92; ILE-95; PHE-98; PHE-99 AND TYR-243</scope>
</reference>
<reference key="10">
    <citation type="journal article" date="2012" name="Genes Dev.">
        <title>Histone methyltransferases regulating rRNA gene dose and dosage control in Arabidopsis.</title>
        <authorList>
            <person name="Pontvianne F."/>
            <person name="Blevins T."/>
            <person name="Chandrasekhara C."/>
            <person name="Feng W."/>
            <person name="Stroud H."/>
            <person name="Jacobsen S.E."/>
            <person name="Michaels S.D."/>
            <person name="Pikaard C.S."/>
        </authorList>
    </citation>
    <scope>FUNCTION</scope>
</reference>
<reference key="11">
    <citation type="journal article" date="2013" name="Nucleic Acids Res.">
        <title>Dual function of MIPS1 as a metabolic enzyme and transcriptional regulator.</title>
        <authorList>
            <person name="Latrasse D."/>
            <person name="Jegu T."/>
            <person name="Meng P.H."/>
            <person name="Mazubert C."/>
            <person name="Hudik E."/>
            <person name="Delarue M."/>
            <person name="Charon C."/>
            <person name="Crespi M."/>
            <person name="Hirt H."/>
            <person name="Raynaud C."/>
            <person name="Bergounioux C."/>
            <person name="Benhamed M."/>
        </authorList>
    </citation>
    <scope>INTERACTION WITH IPS1</scope>
</reference>
<reference key="12">
    <citation type="journal article" date="2014" name="Science">
        <title>Selective methylation of histone H3 variant H3.1 regulates heterochromatin replication.</title>
        <authorList>
            <person name="Jacob Y."/>
            <person name="Bergamin E."/>
            <person name="Donoghue M.T."/>
            <person name="Mongeon V."/>
            <person name="LeBlanc C."/>
            <person name="Voigt P."/>
            <person name="Underwood C.J."/>
            <person name="Brunzelle J.S."/>
            <person name="Michaels S.D."/>
            <person name="Reinberg D."/>
            <person name="Couture J.F."/>
            <person name="Martienssen R.A."/>
        </authorList>
    </citation>
    <scope>SUBSTRATE SPECIFICITY</scope>
    <scope>MUTAGENESIS OF GLU-186; MET-190; ARG-309 AND TYR-339</scope>
</reference>
<reference key="13">
    <citation type="journal article" date="2022" name="Science">
        <title>The histone H3.1 variant regulates TONSOKU-mediated DNA repair during replication.</title>
        <authorList>
            <person name="Davarinejad H."/>
            <person name="Huang Y.C."/>
            <person name="Mermaz B."/>
            <person name="LeBlanc C."/>
            <person name="Poulet A."/>
            <person name="Thomson G."/>
            <person name="Joly V."/>
            <person name="Munoz M."/>
            <person name="Arvanitis-Vigneault A."/>
            <person name="Valsakumar D."/>
            <person name="Villarino G."/>
            <person name="Ross A."/>
            <person name="Rotstein B.H."/>
            <person name="Alarcon E.I."/>
            <person name="Brunzelle J.S."/>
            <person name="Voigt P."/>
            <person name="Dong J."/>
            <person name="Couture J.F."/>
            <person name="Jacob Y."/>
        </authorList>
    </citation>
    <scope>FUNCTION</scope>
    <scope>CATALYTIC ACTIVITY</scope>
</reference>
<sequence length="349" mass="39640">MVAVRRRRTQASNPRSEPPQHMSDHDSDSDWDTVCEECSSGKQPAKLLLCDKCDKGFHLFCLRPILVSVPKGSWFCPSCSKHQIPKSFPLIQTKIIDFFRIKRSPDSSQISSSSDSIGKKRKKTSLVMSKKKRRLLPYNPSNDPQRRLEQMASLATALRASNTKFSNELTYVSGKAPRSANQAAFEKGGMQVLSKEGVETLALCKKMMDLGECPPLMVVFDPYEGFTVEADRFIKDWTIITEYVGDVDYLSNREDDYDGDSMMTLLHASDPSQCLVICPDRRSNIARFISGINNHSPEGRKKQNLKCVRFNINGEARVLLVANRDISKGERLYYDYNGYEHEYPTEHFV</sequence>
<comment type="function">
    <text evidence="5 6 8 9 12">Histone methyltransferase that specifically monomethylates 'Lys-27' of histone H3 (H3K27me1). Has higher activity on nucleosomes containing H3.1 than H3.3. Involved in the formation of constitutive heterochromatin and the silencing of heterochromatic elements. May act as a positive regulator of the G1-S transition. Influences which sets of rRNA gene variants are expressed or silenced. Up-regulated by E2FB.</text>
</comment>
<comment type="catalytic activity">
    <reaction evidence="6 12">
        <text>L-lysyl(27)-[histone H3] + S-adenosyl-L-methionine = N(6)-methyl-L-lysyl(27)-[histone H3] + S-adenosyl-L-homocysteine + H(+)</text>
        <dbReference type="Rhea" id="RHEA:60296"/>
        <dbReference type="Rhea" id="RHEA-COMP:15544"/>
        <dbReference type="Rhea" id="RHEA-COMP:15548"/>
        <dbReference type="ChEBI" id="CHEBI:15378"/>
        <dbReference type="ChEBI" id="CHEBI:29969"/>
        <dbReference type="ChEBI" id="CHEBI:57856"/>
        <dbReference type="ChEBI" id="CHEBI:59789"/>
        <dbReference type="ChEBI" id="CHEBI:61929"/>
        <dbReference type="EC" id="2.1.1.369"/>
    </reaction>
</comment>
<comment type="subunit">
    <text evidence="5 7 8 10">Interacts with PCNA1 and PCNA2. Interacts (via PHD domain) with HTR1 (via N-terminus). Interacts with IPS1.</text>
</comment>
<comment type="subcellular location">
    <subcellularLocation>
        <location evidence="5">Nucleus</location>
    </subcellularLocation>
</comment>
<comment type="tissue specificity">
    <text evidence="5">Expressed in leaves, roots, stems, flowers and siliques. Up-regulated in tissues where cell division is active.</text>
</comment>
<comment type="disruption phenotype">
    <text evidence="6">No visible phenotype. Atxr5 and atxr6 double mutant is smaller than wild-type plants, shows partial decondensation of the chromocenter, decreased H3K27 monomethylation and increased DNA re-replication.</text>
</comment>
<comment type="miscellaneous">
    <text evidence="13">The binding to histone H3.2 is unaffected by mono-, di, or trimethylation at H3K9, but is strongly reduced by increasing levels of H3K4 methylation.</text>
</comment>
<comment type="similarity">
    <text evidence="3">Belongs to the class V-like SAM-binding methyltransferase superfamily. Histone-lysine methyltransferase family. TRX/MLL subfamily.</text>
</comment>
<organism>
    <name type="scientific">Arabidopsis thaliana</name>
    <name type="common">Mouse-ear cress</name>
    <dbReference type="NCBI Taxonomy" id="3702"/>
    <lineage>
        <taxon>Eukaryota</taxon>
        <taxon>Viridiplantae</taxon>
        <taxon>Streptophyta</taxon>
        <taxon>Embryophyta</taxon>
        <taxon>Tracheophyta</taxon>
        <taxon>Spermatophyta</taxon>
        <taxon>Magnoliopsida</taxon>
        <taxon>eudicotyledons</taxon>
        <taxon>Gunneridae</taxon>
        <taxon>Pentapetalae</taxon>
        <taxon>rosids</taxon>
        <taxon>malvids</taxon>
        <taxon>Brassicales</taxon>
        <taxon>Brassicaceae</taxon>
        <taxon>Camelineae</taxon>
        <taxon>Arabidopsis</taxon>
    </lineage>
</organism>